<gene>
    <name evidence="1" type="primary">rplM</name>
    <name type="ordered locus">NSE_0840</name>
</gene>
<evidence type="ECO:0000255" key="1">
    <source>
        <dbReference type="HAMAP-Rule" id="MF_01366"/>
    </source>
</evidence>
<evidence type="ECO:0000305" key="2"/>
<sequence length="152" mass="17109">MSTFFLKQAQIEKQWIVVDATDAVVGRLAAFVSTILRGKTKPTYTPHMDCGDNVIVVNASKVKFSGSKMSDKVYYRHTGYPGGIKSTTPAKILRGKKPCEVVKLAVKRMLDDGPMARRRLKNLYVYAGPEHRHEAQKPSIVEFASLNRKNRR</sequence>
<dbReference type="EMBL" id="CP000237">
    <property type="protein sequence ID" value="ABD46372.1"/>
    <property type="molecule type" value="Genomic_DNA"/>
</dbReference>
<dbReference type="RefSeq" id="WP_011452214.1">
    <property type="nucleotide sequence ID" value="NC_007798.1"/>
</dbReference>
<dbReference type="SMR" id="Q2GCT8"/>
<dbReference type="STRING" id="222891.NSE_0840"/>
<dbReference type="KEGG" id="nse:NSE_0840"/>
<dbReference type="eggNOG" id="COG0102">
    <property type="taxonomic scope" value="Bacteria"/>
</dbReference>
<dbReference type="HOGENOM" id="CLU_082184_2_2_5"/>
<dbReference type="OrthoDB" id="9801330at2"/>
<dbReference type="Proteomes" id="UP000001942">
    <property type="component" value="Chromosome"/>
</dbReference>
<dbReference type="GO" id="GO:0022625">
    <property type="term" value="C:cytosolic large ribosomal subunit"/>
    <property type="evidence" value="ECO:0007669"/>
    <property type="project" value="TreeGrafter"/>
</dbReference>
<dbReference type="GO" id="GO:0003729">
    <property type="term" value="F:mRNA binding"/>
    <property type="evidence" value="ECO:0007669"/>
    <property type="project" value="TreeGrafter"/>
</dbReference>
<dbReference type="GO" id="GO:0003735">
    <property type="term" value="F:structural constituent of ribosome"/>
    <property type="evidence" value="ECO:0007669"/>
    <property type="project" value="InterPro"/>
</dbReference>
<dbReference type="GO" id="GO:0017148">
    <property type="term" value="P:negative regulation of translation"/>
    <property type="evidence" value="ECO:0007669"/>
    <property type="project" value="TreeGrafter"/>
</dbReference>
<dbReference type="GO" id="GO:0006412">
    <property type="term" value="P:translation"/>
    <property type="evidence" value="ECO:0007669"/>
    <property type="project" value="UniProtKB-UniRule"/>
</dbReference>
<dbReference type="CDD" id="cd00392">
    <property type="entry name" value="Ribosomal_L13"/>
    <property type="match status" value="1"/>
</dbReference>
<dbReference type="Gene3D" id="3.90.1180.10">
    <property type="entry name" value="Ribosomal protein L13"/>
    <property type="match status" value="1"/>
</dbReference>
<dbReference type="HAMAP" id="MF_01366">
    <property type="entry name" value="Ribosomal_uL13"/>
    <property type="match status" value="1"/>
</dbReference>
<dbReference type="InterPro" id="IPR005822">
    <property type="entry name" value="Ribosomal_uL13"/>
</dbReference>
<dbReference type="InterPro" id="IPR005823">
    <property type="entry name" value="Ribosomal_uL13_bac-type"/>
</dbReference>
<dbReference type="InterPro" id="IPR036899">
    <property type="entry name" value="Ribosomal_uL13_sf"/>
</dbReference>
<dbReference type="NCBIfam" id="TIGR01066">
    <property type="entry name" value="rplM_bact"/>
    <property type="match status" value="1"/>
</dbReference>
<dbReference type="PANTHER" id="PTHR11545:SF2">
    <property type="entry name" value="LARGE RIBOSOMAL SUBUNIT PROTEIN UL13M"/>
    <property type="match status" value="1"/>
</dbReference>
<dbReference type="PANTHER" id="PTHR11545">
    <property type="entry name" value="RIBOSOMAL PROTEIN L13"/>
    <property type="match status" value="1"/>
</dbReference>
<dbReference type="Pfam" id="PF00572">
    <property type="entry name" value="Ribosomal_L13"/>
    <property type="match status" value="1"/>
</dbReference>
<dbReference type="PIRSF" id="PIRSF002181">
    <property type="entry name" value="Ribosomal_L13"/>
    <property type="match status" value="1"/>
</dbReference>
<dbReference type="SUPFAM" id="SSF52161">
    <property type="entry name" value="Ribosomal protein L13"/>
    <property type="match status" value="1"/>
</dbReference>
<name>RL13_NEOSM</name>
<accession>Q2GCT8</accession>
<keyword id="KW-0687">Ribonucleoprotein</keyword>
<keyword id="KW-0689">Ribosomal protein</keyword>
<reference key="1">
    <citation type="journal article" date="2006" name="PLoS Genet.">
        <title>Comparative genomics of emerging human ehrlichiosis agents.</title>
        <authorList>
            <person name="Dunning Hotopp J.C."/>
            <person name="Lin M."/>
            <person name="Madupu R."/>
            <person name="Crabtree J."/>
            <person name="Angiuoli S.V."/>
            <person name="Eisen J.A."/>
            <person name="Seshadri R."/>
            <person name="Ren Q."/>
            <person name="Wu M."/>
            <person name="Utterback T.R."/>
            <person name="Smith S."/>
            <person name="Lewis M."/>
            <person name="Khouri H."/>
            <person name="Zhang C."/>
            <person name="Niu H."/>
            <person name="Lin Q."/>
            <person name="Ohashi N."/>
            <person name="Zhi N."/>
            <person name="Nelson W.C."/>
            <person name="Brinkac L.M."/>
            <person name="Dodson R.J."/>
            <person name="Rosovitz M.J."/>
            <person name="Sundaram J.P."/>
            <person name="Daugherty S.C."/>
            <person name="Davidsen T."/>
            <person name="Durkin A.S."/>
            <person name="Gwinn M.L."/>
            <person name="Haft D.H."/>
            <person name="Selengut J.D."/>
            <person name="Sullivan S.A."/>
            <person name="Zafar N."/>
            <person name="Zhou L."/>
            <person name="Benahmed F."/>
            <person name="Forberger H."/>
            <person name="Halpin R."/>
            <person name="Mulligan S."/>
            <person name="Robinson J."/>
            <person name="White O."/>
            <person name="Rikihisa Y."/>
            <person name="Tettelin H."/>
        </authorList>
    </citation>
    <scope>NUCLEOTIDE SEQUENCE [LARGE SCALE GENOMIC DNA]</scope>
    <source>
        <strain>ATCC VR-367 / Miyayama</strain>
    </source>
</reference>
<proteinExistence type="inferred from homology"/>
<feature type="chain" id="PRO_1000055422" description="Large ribosomal subunit protein uL13">
    <location>
        <begin position="1"/>
        <end position="152"/>
    </location>
</feature>
<organism>
    <name type="scientific">Neorickettsia sennetsu (strain ATCC VR-367 / Miyayama)</name>
    <name type="common">Ehrlichia sennetsu</name>
    <dbReference type="NCBI Taxonomy" id="222891"/>
    <lineage>
        <taxon>Bacteria</taxon>
        <taxon>Pseudomonadati</taxon>
        <taxon>Pseudomonadota</taxon>
        <taxon>Alphaproteobacteria</taxon>
        <taxon>Rickettsiales</taxon>
        <taxon>Anaplasmataceae</taxon>
        <taxon>Neorickettsia</taxon>
    </lineage>
</organism>
<protein>
    <recommendedName>
        <fullName evidence="1">Large ribosomal subunit protein uL13</fullName>
    </recommendedName>
    <alternativeName>
        <fullName evidence="2">50S ribosomal protein L13</fullName>
    </alternativeName>
</protein>
<comment type="function">
    <text evidence="1">This protein is one of the early assembly proteins of the 50S ribosomal subunit, although it is not seen to bind rRNA by itself. It is important during the early stages of 50S assembly.</text>
</comment>
<comment type="subunit">
    <text evidence="1">Part of the 50S ribosomal subunit.</text>
</comment>
<comment type="similarity">
    <text evidence="1">Belongs to the universal ribosomal protein uL13 family.</text>
</comment>